<keyword id="KW-0167">Capsid protein</keyword>
<keyword id="KW-1139">Helical capsid protein</keyword>
<keyword id="KW-1048">Host nucleus</keyword>
<keyword id="KW-0945">Host-virus interaction</keyword>
<keyword id="KW-0687">Ribonucleoprotein</keyword>
<keyword id="KW-0694">RNA-binding</keyword>
<keyword id="KW-0543">Viral nucleoprotein</keyword>
<keyword id="KW-1163">Viral penetration into host nucleus</keyword>
<keyword id="KW-0946">Virion</keyword>
<keyword id="KW-1160">Virus entry into host cell</keyword>
<proteinExistence type="evidence at transcript level"/>
<reference key="1">
    <citation type="journal article" date="1997" name="Virology">
        <title>The three subunits of the polymerase and the nucleoprotein of influenza B virus are the minimum set of viral proteins required for expression of a model RNA template.</title>
        <authorList>
            <person name="Jambrina E."/>
            <person name="Barcena J."/>
            <person name="Uez O."/>
            <person name="Portela A."/>
        </authorList>
    </citation>
    <scope>NUCLEOTIDE SEQUENCE [MRNA]</scope>
</reference>
<dbReference type="EMBL" id="AF005739">
    <property type="protein sequence ID" value="AAB72046.1"/>
    <property type="molecule type" value="mRNA"/>
</dbReference>
<dbReference type="SMR" id="O36433"/>
<dbReference type="GO" id="GO:0019029">
    <property type="term" value="C:helical viral capsid"/>
    <property type="evidence" value="ECO:0007669"/>
    <property type="project" value="UniProtKB-UniRule"/>
</dbReference>
<dbReference type="GO" id="GO:0043657">
    <property type="term" value="C:host cell"/>
    <property type="evidence" value="ECO:0007669"/>
    <property type="project" value="GOC"/>
</dbReference>
<dbReference type="GO" id="GO:0042025">
    <property type="term" value="C:host cell nucleus"/>
    <property type="evidence" value="ECO:0007669"/>
    <property type="project" value="UniProtKB-SubCell"/>
</dbReference>
<dbReference type="GO" id="GO:1990904">
    <property type="term" value="C:ribonucleoprotein complex"/>
    <property type="evidence" value="ECO:0007669"/>
    <property type="project" value="UniProtKB-KW"/>
</dbReference>
<dbReference type="GO" id="GO:0019013">
    <property type="term" value="C:viral nucleocapsid"/>
    <property type="evidence" value="ECO:0007669"/>
    <property type="project" value="UniProtKB-UniRule"/>
</dbReference>
<dbReference type="GO" id="GO:0003723">
    <property type="term" value="F:RNA binding"/>
    <property type="evidence" value="ECO:0007669"/>
    <property type="project" value="UniProtKB-UniRule"/>
</dbReference>
<dbReference type="GO" id="GO:0005198">
    <property type="term" value="F:structural molecule activity"/>
    <property type="evidence" value="ECO:0007669"/>
    <property type="project" value="UniProtKB-UniRule"/>
</dbReference>
<dbReference type="GO" id="GO:0046718">
    <property type="term" value="P:symbiont entry into host cell"/>
    <property type="evidence" value="ECO:0007669"/>
    <property type="project" value="UniProtKB-KW"/>
</dbReference>
<dbReference type="GO" id="GO:0075732">
    <property type="term" value="P:viral penetration into host nucleus"/>
    <property type="evidence" value="ECO:0007669"/>
    <property type="project" value="UniProtKB-UniRule"/>
</dbReference>
<dbReference type="HAMAP" id="MF_04070">
    <property type="entry name" value="INFV_NCAP"/>
    <property type="match status" value="1"/>
</dbReference>
<dbReference type="InterPro" id="IPR002141">
    <property type="entry name" value="Flu_NP"/>
</dbReference>
<dbReference type="Pfam" id="PF00506">
    <property type="entry name" value="Flu_NP"/>
    <property type="match status" value="1"/>
</dbReference>
<dbReference type="SUPFAM" id="SSF161003">
    <property type="entry name" value="flu NP-like"/>
    <property type="match status" value="1"/>
</dbReference>
<accession>O36433</accession>
<protein>
    <recommendedName>
        <fullName evidence="1">Nucleoprotein</fullName>
    </recommendedName>
    <alternativeName>
        <fullName evidence="1">Nucleocapsid protein</fullName>
        <shortName evidence="1">Protein N</shortName>
    </alternativeName>
</protein>
<feature type="chain" id="PRO_0000079143" description="Nucleoprotein">
    <location>
        <begin position="1"/>
        <end position="560"/>
    </location>
</feature>
<feature type="region of interest" description="Disordered" evidence="2">
    <location>
        <begin position="1"/>
        <end position="73"/>
    </location>
</feature>
<feature type="compositionally biased region" description="Polar residues" evidence="2">
    <location>
        <begin position="10"/>
        <end position="29"/>
    </location>
</feature>
<comment type="function">
    <text evidence="1">Encapsidates the negative strand viral RNA, protecting it from nucleases. The encapsidated genomic RNA is termed the ribonucleoprotein (RNP) and serves as template for transcription and replication. The RNP needs to be localized in the host nucleus to start an infectious cycle, but is too large to diffuse through the nuclear pore complex. NP comprises at least 2 nuclear localization signals that are responsible for the active RNP import into the nucleus through cellular importin alpha/beta pathway. Later in the infection, nclear export of RNPs are mediated through viral proteins NEP interacting with M1 which binds nucleoproteins. It is possible that nucleoprotein binds directly host exportin-1/XPO1 and plays an active role in RNPs nuclear export. M1 interaction with RNP seems to hide nucleoprotein's nuclear localization signals. Soon after a virion infects a new cell, M1 dissociates from the RNP under acidification of the virion driven by M2 protein. Dissociation of M1 from RNP unmasks nucleoprotein's nuclear localization signals, targeting the RNP to the nucleus.</text>
</comment>
<comment type="subunit">
    <text evidence="1">Homomultimerizes to form the nucleocapsid. May bind host exportin-1/XPO1. Binds to viral genomic RNA. Protein-RNA contacts are mediated by a combination of electrostatic interactions between positively charged residues and the phosphate backbone and planar interactions between aromatic side chains and bases.</text>
</comment>
<comment type="subcellular location">
    <subcellularLocation>
        <location evidence="1">Virion</location>
    </subcellularLocation>
    <subcellularLocation>
        <location evidence="1">Host nucleus</location>
    </subcellularLocation>
</comment>
<comment type="PTM">
    <text evidence="1">Late in virus-infected cells, may be cleaved from a 56-kDa protein to a 53-kDa protein by a cellular caspase. This cleavage might be a marker for the onset of apoptosis in infected cells or have a specific function in virus host interaction.</text>
</comment>
<comment type="similarity">
    <text evidence="1">Belongs to the influenza viruses nucleoprotein family.</text>
</comment>
<name>NCAP_INBP9</name>
<organismHost>
    <name type="scientific">Homo sapiens</name>
    <name type="common">Human</name>
    <dbReference type="NCBI Taxonomy" id="9606"/>
</organismHost>
<organism>
    <name type="scientific">Influenza B virus (strain B/Panama/45/1990)</name>
    <dbReference type="NCBI Taxonomy" id="408929"/>
    <lineage>
        <taxon>Viruses</taxon>
        <taxon>Riboviria</taxon>
        <taxon>Orthornavirae</taxon>
        <taxon>Negarnaviricota</taxon>
        <taxon>Polyploviricotina</taxon>
        <taxon>Insthoviricetes</taxon>
        <taxon>Articulavirales</taxon>
        <taxon>Orthomyxoviridae</taxon>
        <taxon>Betainfluenzavirus</taxon>
        <taxon>Betainfluenzavirus influenzae</taxon>
        <taxon>Influenza B virus</taxon>
    </lineage>
</organism>
<evidence type="ECO:0000255" key="1">
    <source>
        <dbReference type="HAMAP-Rule" id="MF_04070"/>
    </source>
</evidence>
<evidence type="ECO:0000256" key="2">
    <source>
        <dbReference type="SAM" id="MobiDB-lite"/>
    </source>
</evidence>
<gene>
    <name evidence="1" type="primary">NP</name>
</gene>
<sequence length="560" mass="61644">MSNMDIDGINTGTIDKTPEEITSGTSGTTRPIIRPATLAPPSNKRTRNPSPERATTSSEADVGRKTQKKQTPTEIKKSVYNMVVKLGEFYNQMMVKAGLNDDMERNLIQNAHAVERILLAATDDKKTEFQRKKNARDVKEGKEEIDHNKTGGTFYKMVRDDKTIYFSPIRITFLKEEVKTMYKTTMGSDGFSGLNHIMIGHSQMNDVCFQRSKALKRVGLDPSLISTFAGSTLPRRSGATGVAIKGGGTLVAEAIRFIGRAMADRGLLRDIKAKTAYEKILLNLKNKCSAPQQKALVDQVIGSRNPGIADIEDLTLLARSMVVVRPSVASKVVLPISIYAKIPQLGFNVEEYSMVGYEAMALYNMATPVSILRMGDDAKDKSQLFFMSCFGAAYEDLRVLSALTGIEFKPRSALKCKGFHVPAKEQVEGMGAALMSIKLQFWAPMTRSGGNEVGGDGGSGQISCSPVFAVERPIALSKQAVRRMLSMNIEGRDADVKGNLLKMMNDSMAKKTNGNAFIGKKMFQISDKNKTNPVEIPIKQTIPNFFFGRDTAEDYDDLDY</sequence>